<accession>P19699</accession>
<accession>Q9WA90</accession>
<organism>
    <name type="scientific">Influenza A virus (strain A/Equine/Kentucky/2/1986 H3N8)</name>
    <dbReference type="NCBI Taxonomy" id="385605"/>
    <lineage>
        <taxon>Viruses</taxon>
        <taxon>Riboviria</taxon>
        <taxon>Orthornavirae</taxon>
        <taxon>Negarnaviricota</taxon>
        <taxon>Polyploviricotina</taxon>
        <taxon>Insthoviricetes</taxon>
        <taxon>Articulavirales</taxon>
        <taxon>Orthomyxoviridae</taxon>
        <taxon>Alphainfluenzavirus</taxon>
        <taxon>Alphainfluenzavirus influenzae</taxon>
        <taxon>Influenza A virus</taxon>
    </lineage>
</organism>
<feature type="signal peptide" evidence="1">
    <location>
        <begin position="1"/>
        <end position="16"/>
    </location>
</feature>
<feature type="chain" id="PRO_0000440521" description="Hemagglutinin" evidence="1">
    <location>
        <begin position="17"/>
        <end position="565"/>
    </location>
</feature>
<feature type="chain" id="PRO_0000038978" description="Hemagglutinin HA1 chain">
    <location>
        <begin position="17"/>
        <end position="343"/>
    </location>
</feature>
<feature type="chain" id="PRO_0000038979" description="Hemagglutinin HA2 chain" evidence="1">
    <location>
        <begin position="345"/>
        <end position="565"/>
    </location>
</feature>
<feature type="topological domain" description="Extracellular" evidence="1">
    <location>
        <begin position="17"/>
        <end position="529"/>
    </location>
</feature>
<feature type="transmembrane region" description="Helical" evidence="1">
    <location>
        <begin position="530"/>
        <end position="550"/>
    </location>
</feature>
<feature type="topological domain" description="Cytoplasmic" evidence="1">
    <location>
        <begin position="551"/>
        <end position="565"/>
    </location>
</feature>
<feature type="site" description="Cleavage; by host" evidence="1">
    <location>
        <begin position="344"/>
        <end position="345"/>
    </location>
</feature>
<feature type="lipid moiety-binding region" description="S-palmitoyl cysteine; by host" evidence="1">
    <location>
        <position position="554"/>
    </location>
</feature>
<feature type="lipid moiety-binding region" description="S-palmitoyl cysteine; by host" evidence="1">
    <location>
        <position position="561"/>
    </location>
</feature>
<feature type="lipid moiety-binding region" description="S-palmitoyl cysteine; by host" evidence="1">
    <location>
        <position position="564"/>
    </location>
</feature>
<feature type="glycosylation site" description="N-linked (GlcNAc...) asparagine; by host" evidence="1">
    <location>
        <position position="23"/>
    </location>
</feature>
<feature type="glycosylation site" description="N-linked (GlcNAc...) asparagine; by host" evidence="1">
    <location>
        <position position="37"/>
    </location>
</feature>
<feature type="glycosylation site" description="N-linked (GlcNAc...) asparagine; by host" evidence="1">
    <location>
        <position position="53"/>
    </location>
</feature>
<feature type="glycosylation site" description="N-linked (GlcNAc...) asparagine; by host" evidence="1">
    <location>
        <position position="68"/>
    </location>
</feature>
<feature type="glycosylation site" description="N-linked (GlcNAc...) asparagine; by host" evidence="1">
    <location>
        <position position="78"/>
    </location>
</feature>
<feature type="glycosylation site" description="N-linked (GlcNAc...) asparagine; by host" evidence="1">
    <location>
        <position position="180"/>
    </location>
</feature>
<feature type="glycosylation site" description="N-linked (GlcNAc...) asparagine; by host" evidence="1">
    <location>
        <position position="300"/>
    </location>
</feature>
<feature type="glycosylation site" description="N-linked (GlcNAc...) asparagine; by host" evidence="1">
    <location>
        <position position="498"/>
    </location>
</feature>
<feature type="disulfide bond" description="Interchain (between HA1 and HA2 chains)" evidence="1">
    <location>
        <begin position="29"/>
        <end position="481"/>
    </location>
</feature>
<feature type="disulfide bond" evidence="1">
    <location>
        <begin position="67"/>
        <end position="292"/>
    </location>
</feature>
<feature type="disulfide bond" evidence="1">
    <location>
        <begin position="79"/>
        <end position="91"/>
    </location>
</feature>
<feature type="disulfide bond" evidence="1">
    <location>
        <begin position="112"/>
        <end position="154"/>
    </location>
</feature>
<feature type="disulfide bond" evidence="1">
    <location>
        <begin position="296"/>
        <end position="320"/>
    </location>
</feature>
<feature type="disulfide bond" evidence="1">
    <location>
        <begin position="488"/>
        <end position="492"/>
    </location>
</feature>
<proteinExistence type="inferred from homology"/>
<name>HEMA_I86A2</name>
<protein>
    <recommendedName>
        <fullName evidence="1">Hemagglutinin</fullName>
    </recommendedName>
    <component>
        <recommendedName>
            <fullName evidence="1">Hemagglutinin HA1 chain</fullName>
        </recommendedName>
    </component>
    <component>
        <recommendedName>
            <fullName evidence="1">Hemagglutinin HA2 chain</fullName>
        </recommendedName>
    </component>
</protein>
<organismHost>
    <name type="scientific">Aves</name>
    <dbReference type="NCBI Taxonomy" id="8782"/>
</organismHost>
<organismHost>
    <name type="scientific">Equus caballus</name>
    <name type="common">Horse</name>
    <dbReference type="NCBI Taxonomy" id="9796"/>
</organismHost>
<keyword id="KW-1167">Clathrin- and caveolin-independent endocytosis of virus by host</keyword>
<keyword id="KW-1165">Clathrin-mediated endocytosis of virus by host</keyword>
<keyword id="KW-1015">Disulfide bond</keyword>
<keyword id="KW-1170">Fusion of virus membrane with host endosomal membrane</keyword>
<keyword id="KW-1168">Fusion of virus membrane with host membrane</keyword>
<keyword id="KW-0325">Glycoprotein</keyword>
<keyword id="KW-0348">Hemagglutinin</keyword>
<keyword id="KW-1032">Host cell membrane</keyword>
<keyword id="KW-1043">Host membrane</keyword>
<keyword id="KW-0945">Host-virus interaction</keyword>
<keyword id="KW-0449">Lipoprotein</keyword>
<keyword id="KW-0472">Membrane</keyword>
<keyword id="KW-0564">Palmitate</keyword>
<keyword id="KW-0732">Signal</keyword>
<keyword id="KW-0812">Transmembrane</keyword>
<keyword id="KW-1133">Transmembrane helix</keyword>
<keyword id="KW-1161">Viral attachment to host cell</keyword>
<keyword id="KW-0261">Viral envelope protein</keyword>
<keyword id="KW-1162">Viral penetration into host cytoplasm</keyword>
<keyword id="KW-0946">Virion</keyword>
<keyword id="KW-1164">Virus endocytosis by host</keyword>
<keyword id="KW-1160">Virus entry into host cell</keyword>
<dbReference type="EMBL" id="M24727">
    <property type="protein sequence ID" value="AAA43102.1"/>
    <property type="molecule type" value="Genomic_RNA"/>
</dbReference>
<dbReference type="SMR" id="P19699"/>
<dbReference type="GlyCosmos" id="P19699">
    <property type="glycosylation" value="8 sites, No reported glycans"/>
</dbReference>
<dbReference type="GO" id="GO:0020002">
    <property type="term" value="C:host cell plasma membrane"/>
    <property type="evidence" value="ECO:0007669"/>
    <property type="project" value="UniProtKB-SubCell"/>
</dbReference>
<dbReference type="GO" id="GO:0016020">
    <property type="term" value="C:membrane"/>
    <property type="evidence" value="ECO:0007669"/>
    <property type="project" value="UniProtKB-UniRule"/>
</dbReference>
<dbReference type="GO" id="GO:0019031">
    <property type="term" value="C:viral envelope"/>
    <property type="evidence" value="ECO:0007669"/>
    <property type="project" value="UniProtKB-UniRule"/>
</dbReference>
<dbReference type="GO" id="GO:0055036">
    <property type="term" value="C:virion membrane"/>
    <property type="evidence" value="ECO:0007669"/>
    <property type="project" value="UniProtKB-SubCell"/>
</dbReference>
<dbReference type="GO" id="GO:0046789">
    <property type="term" value="F:host cell surface receptor binding"/>
    <property type="evidence" value="ECO:0007669"/>
    <property type="project" value="UniProtKB-UniRule"/>
</dbReference>
<dbReference type="GO" id="GO:0075512">
    <property type="term" value="P:clathrin-dependent endocytosis of virus by host cell"/>
    <property type="evidence" value="ECO:0007669"/>
    <property type="project" value="UniProtKB-UniRule"/>
</dbReference>
<dbReference type="GO" id="GO:0039654">
    <property type="term" value="P:fusion of virus membrane with host endosome membrane"/>
    <property type="evidence" value="ECO:0007669"/>
    <property type="project" value="UniProtKB-UniRule"/>
</dbReference>
<dbReference type="GO" id="GO:0019064">
    <property type="term" value="P:fusion of virus membrane with host plasma membrane"/>
    <property type="evidence" value="ECO:0007669"/>
    <property type="project" value="InterPro"/>
</dbReference>
<dbReference type="GO" id="GO:0046761">
    <property type="term" value="P:viral budding from plasma membrane"/>
    <property type="evidence" value="ECO:0007669"/>
    <property type="project" value="UniProtKB-UniRule"/>
</dbReference>
<dbReference type="GO" id="GO:0019062">
    <property type="term" value="P:virion attachment to host cell"/>
    <property type="evidence" value="ECO:0007669"/>
    <property type="project" value="UniProtKB-KW"/>
</dbReference>
<dbReference type="FunFam" id="3.90.20.10:FF:000001">
    <property type="entry name" value="Hemagglutinin"/>
    <property type="match status" value="1"/>
</dbReference>
<dbReference type="FunFam" id="3.90.209.20:FF:000001">
    <property type="entry name" value="Hemagglutinin"/>
    <property type="match status" value="1"/>
</dbReference>
<dbReference type="Gene3D" id="3.90.20.10">
    <property type="match status" value="1"/>
</dbReference>
<dbReference type="Gene3D" id="3.90.209.20">
    <property type="match status" value="1"/>
</dbReference>
<dbReference type="HAMAP" id="MF_04072">
    <property type="entry name" value="INFV_HEMA"/>
    <property type="match status" value="1"/>
</dbReference>
<dbReference type="InterPro" id="IPR008980">
    <property type="entry name" value="Capsid_hemagglutn"/>
</dbReference>
<dbReference type="InterPro" id="IPR013828">
    <property type="entry name" value="Hemagglutn_HA1_a/b_dom_sf"/>
</dbReference>
<dbReference type="InterPro" id="IPR000149">
    <property type="entry name" value="Hemagglutn_influenz_A"/>
</dbReference>
<dbReference type="InterPro" id="IPR001364">
    <property type="entry name" value="Hemagglutn_influenz_A/B"/>
</dbReference>
<dbReference type="Pfam" id="PF00509">
    <property type="entry name" value="Hemagglutinin"/>
    <property type="match status" value="1"/>
</dbReference>
<dbReference type="PRINTS" id="PR00330">
    <property type="entry name" value="HEMAGGLUTN1"/>
</dbReference>
<dbReference type="PRINTS" id="PR00329">
    <property type="entry name" value="HEMAGGLUTN12"/>
</dbReference>
<dbReference type="SUPFAM" id="SSF58064">
    <property type="entry name" value="Influenza hemagglutinin (stalk)"/>
    <property type="match status" value="1"/>
</dbReference>
<dbReference type="SUPFAM" id="SSF49818">
    <property type="entry name" value="Viral protein domain"/>
    <property type="match status" value="1"/>
</dbReference>
<sequence length="565" mass="63610">MKTTIILILLTHWVYSQNPTSGNNTATLCLGHHAVANGTLVKTITDDQIEVTNATELVQSISIGKICNNSYRVLDGRNCTLIDAMLGDPHCDVFQYENWDLFIERSSASSNCYPYDIPDYASLRSIVASSGTLEFTAEGFTWTGVTQNGRSGACKRGSADSFFSRLNWLTKSGNSYPTLNVTMPNNNNFDKLYIWGIHHPSSNNEQTKLYIQESGRVTVSTKRSQQTIIPNIGSRPWVRGQSGRISIYWTIVKPGDILIINSNGNLVAPRGYFKLRTGKSSVMRSDAPIDTCVSECITPNGSIPNDKPFQNVNKVTYGKCPKYIRQNTLKLATGMRNVPEKQIRGIFGAIAGFIENGWEGMVDGWYGFRYQNSEGTGQAGDLKSTQAAIDQINGKLNRVIERTNEKFHQIEKEFSEVEGRIQDLEKYVEDTKIDLWSYNAELLVALENQHTIDLTDAEMNKLFEKTRRQLRENAEDMGGGCFKIYHKCDNACIGSIRNGTYDHYIYRDEALNNRFQIKGVELKSGYKDWILWISFAISCFLICVVLLGFIMWACQKGNIRCNICI</sequence>
<evidence type="ECO:0000255" key="1">
    <source>
        <dbReference type="HAMAP-Rule" id="MF_04072"/>
    </source>
</evidence>
<evidence type="ECO:0000305" key="2"/>
<comment type="function">
    <text>Binds to sialic acid-containing receptors on the cell surface, bringing about the attachment of the virus particle to the cell. This attachment induces virion internalization of about two third of the virus particles through clathrin-dependent endocytosis and about one third through a clathrin- and caveolin-independent pathway. Plays a major role in the determination of host range restriction and virulence. Class I viral fusion protein. Responsible for penetration of the virus into the cell cytoplasm by mediating the fusion of the membrane of the endocytosed virus particle with the endosomal membrane. Low pH in endosomes induces an irreversible conformational change in HA2, releasing the fusion hydrophobic peptide. Several trimers are required to form a competent fusion pore.</text>
</comment>
<comment type="function">
    <text evidence="1">Binds to sialic acid-containing receptors on the cell surface, bringing about the attachment of the virus particle to the cell. This attachment induces virion internalization either through clathrin-dependent endocytosis or through clathrin- and caveolin-independent pathway. Plays a major role in the determination of host range restriction and virulence. Class I viral fusion protein. Responsible for penetration of the virus into the cell cytoplasm by mediating the fusion of the membrane of the endocytosed virus particle with the endosomal membrane. Low pH in endosomes induces an irreversible conformational change in HA2, releasing the fusion hydrophobic peptide. Several trimers are required to form a competent fusion pore.</text>
</comment>
<comment type="subunit">
    <text evidence="1">Homotrimer of disulfide-linked HA1-HA2.</text>
</comment>
<comment type="subcellular location">
    <subcellularLocation>
        <location evidence="1">Virion membrane</location>
        <topology evidence="1">Single-pass type I membrane protein</topology>
    </subcellularLocation>
    <subcellularLocation>
        <location evidence="1">Host apical cell membrane</location>
        <topology evidence="1">Single-pass type I membrane protein</topology>
    </subcellularLocation>
    <text evidence="1">Targeted to the apical plasma membrane in epithelial polarized cells through a signal present in the transmembrane domain. Associated with glycosphingolipid- and cholesterol-enriched detergent-resistant lipid rafts.</text>
</comment>
<comment type="PTM">
    <text evidence="1">Palmitoylated.</text>
</comment>
<comment type="PTM">
    <text evidence="1">In natural infection, inactive HA is matured into HA1 and HA2 outside the cell by one or more trypsin-like, arginine-specific endoprotease secreted by the bronchial epithelial cells. One identified protease that may be involved in this process is secreted in lungs by club cells.</text>
</comment>
<comment type="miscellaneous">
    <text>Major glycoprotein, comprises over 80% of the envelope proteins present in virus particle.</text>
</comment>
<comment type="miscellaneous">
    <text>The extent of infection into host organism is determined by HA. Influenza viruses bud from the apical surface of polarized epithelial cells (e.g. bronchial epithelial cells) into lumen of lungs and are therefore usually pneumotropic. The reason is that HA is cleaved by tryptase clara which is restricted to lungs. However, HAs of H5 and H7 pantropic avian viruses subtypes can be cleaved by furin and subtilisin-type enzymes, allowing the virus to grow in other organs than lungs.</text>
</comment>
<comment type="miscellaneous">
    <text evidence="2">The influenza A genome consist of 8 RNA segments. Genetic variation of hemagglutinin and/or neuraminidase genes results in the emergence of new influenza strains. The mechanism of variation can be the result of point mutations or the result of genetic reassortment between segments of two different strains.</text>
</comment>
<comment type="similarity">
    <text evidence="1">Belongs to the influenza viruses hemagglutinin family.</text>
</comment>
<gene>
    <name evidence="1" type="primary">HA</name>
</gene>
<reference key="1">
    <citation type="journal article" date="1989" name="Virology">
        <title>Evolution of the hemagglutinin of equine H3 influenza viruses.</title>
        <authorList>
            <person name="Kawaoka Y."/>
            <person name="Bean W.J."/>
            <person name="Webster R.G."/>
        </authorList>
    </citation>
    <scope>NUCLEOTIDE SEQUENCE [GENOMIC RNA]</scope>
</reference>